<accession>Q8LH59</accession>
<protein>
    <recommendedName>
        <fullName evidence="6">Transcription factor MYBS1</fullName>
    </recommendedName>
    <alternativeName>
        <fullName evidence="6">Myb-related protein S1</fullName>
        <shortName evidence="6">OsMYBS1</shortName>
    </alternativeName>
    <alternativeName>
        <fullName evidence="7">Syringolide-induced protein 1-3-1B</fullName>
    </alternativeName>
</protein>
<proteinExistence type="evidence at protein level"/>
<gene>
    <name evidence="6" type="primary">MYBS1</name>
    <name evidence="8" type="ordered locus">Os01g0524500</name>
    <name evidence="7" type="ORF">OJ1005_B10.31</name>
    <name evidence="8" type="ORF">OSNPB_010524500</name>
</gene>
<keyword id="KW-0010">Activator</keyword>
<keyword id="KW-0963">Cytoplasm</keyword>
<keyword id="KW-0238">DNA-binding</keyword>
<keyword id="KW-0539">Nucleus</keyword>
<keyword id="KW-1185">Reference proteome</keyword>
<keyword id="KW-0804">Transcription</keyword>
<keyword id="KW-0805">Transcription regulation</keyword>
<sequence length="306" mass="31913">MTSQAATTTTTAAAAAAWTREDDKAFENALAACAAPPPADGGAPDDDWFAALAASVPGARSAEEVRRHYEALVEDVAAIDAGRVPLPRYAGEESAAPPDGAGAAAAASKDGGHRRDERKGGGGGYDGGKSCSKAEQERRKGIPWTEEEHRLFLLGLDKFGKGDWRSISRNFVISRTPTQVASHAQKYFIRLNSMNRDRRRSSIHDITSVTAGDQVAAQQGAPITGHQATGNPAAAALGPPGMKHHHHHHPGGAPPPMPMYSAAPMGHPVAGHMVPAAVGTPVVFPPGHAPYVVPVGYPAPPAKMHQ</sequence>
<reference key="1">
    <citation type="journal article" date="2002" name="Plant Cell">
        <title>Three novel MYB proteins with one DNA binding repeat mediate sugar and hormone regulation of alpha-amylase gene expression.</title>
        <authorList>
            <person name="Lu C.-A."/>
            <person name="Ho T.-H."/>
            <person name="Ho S.-L."/>
            <person name="Yu S.-M."/>
        </authorList>
    </citation>
    <scope>NUCLEOTIDE SEQUENCE [MRNA]</scope>
    <scope>FUNCTION</scope>
    <scope>TISSUE SPECIFICITY</scope>
    <scope>HOMODIMERIZATION</scope>
    <scope>INDUCTION BY SUCROSE AND GIBBERELLIC ACID</scope>
</reference>
<reference key="2">
    <citation type="journal article" date="2002" name="Nature">
        <title>The genome sequence and structure of rice chromosome 1.</title>
        <authorList>
            <person name="Sasaki T."/>
            <person name="Matsumoto T."/>
            <person name="Yamamoto K."/>
            <person name="Sakata K."/>
            <person name="Baba T."/>
            <person name="Katayose Y."/>
            <person name="Wu J."/>
            <person name="Niimura Y."/>
            <person name="Cheng Z."/>
            <person name="Nagamura Y."/>
            <person name="Antonio B.A."/>
            <person name="Kanamori H."/>
            <person name="Hosokawa S."/>
            <person name="Masukawa M."/>
            <person name="Arikawa K."/>
            <person name="Chiden Y."/>
            <person name="Hayashi M."/>
            <person name="Okamoto M."/>
            <person name="Ando T."/>
            <person name="Aoki H."/>
            <person name="Arita K."/>
            <person name="Hamada M."/>
            <person name="Harada C."/>
            <person name="Hijishita S."/>
            <person name="Honda M."/>
            <person name="Ichikawa Y."/>
            <person name="Idonuma A."/>
            <person name="Iijima M."/>
            <person name="Ikeda M."/>
            <person name="Ikeno M."/>
            <person name="Ito S."/>
            <person name="Ito T."/>
            <person name="Ito Y."/>
            <person name="Ito Y."/>
            <person name="Iwabuchi A."/>
            <person name="Kamiya K."/>
            <person name="Karasawa W."/>
            <person name="Katagiri S."/>
            <person name="Kikuta A."/>
            <person name="Kobayashi N."/>
            <person name="Kono I."/>
            <person name="Machita K."/>
            <person name="Maehara T."/>
            <person name="Mizuno H."/>
            <person name="Mizubayashi T."/>
            <person name="Mukai Y."/>
            <person name="Nagasaki H."/>
            <person name="Nakashima M."/>
            <person name="Nakama Y."/>
            <person name="Nakamichi Y."/>
            <person name="Nakamura M."/>
            <person name="Namiki N."/>
            <person name="Negishi M."/>
            <person name="Ohta I."/>
            <person name="Ono N."/>
            <person name="Saji S."/>
            <person name="Sakai K."/>
            <person name="Shibata M."/>
            <person name="Shimokawa T."/>
            <person name="Shomura A."/>
            <person name="Song J."/>
            <person name="Takazaki Y."/>
            <person name="Terasawa K."/>
            <person name="Tsuji K."/>
            <person name="Waki K."/>
            <person name="Yamagata H."/>
            <person name="Yamane H."/>
            <person name="Yoshiki S."/>
            <person name="Yoshihara R."/>
            <person name="Yukawa K."/>
            <person name="Zhong H."/>
            <person name="Iwama H."/>
            <person name="Endo T."/>
            <person name="Ito H."/>
            <person name="Hahn J.H."/>
            <person name="Kim H.-I."/>
            <person name="Eun M.-Y."/>
            <person name="Yano M."/>
            <person name="Jiang J."/>
            <person name="Gojobori T."/>
        </authorList>
    </citation>
    <scope>NUCLEOTIDE SEQUENCE [LARGE SCALE GENOMIC DNA]</scope>
    <source>
        <strain>cv. Nipponbare</strain>
    </source>
</reference>
<reference key="3">
    <citation type="journal article" date="2005" name="Nature">
        <title>The map-based sequence of the rice genome.</title>
        <authorList>
            <consortium name="International rice genome sequencing project (IRGSP)"/>
        </authorList>
    </citation>
    <scope>NUCLEOTIDE SEQUENCE [LARGE SCALE GENOMIC DNA]</scope>
    <source>
        <strain>cv. Nipponbare</strain>
    </source>
</reference>
<reference key="4">
    <citation type="journal article" date="2013" name="Rice">
        <title>Improvement of the Oryza sativa Nipponbare reference genome using next generation sequence and optical map data.</title>
        <authorList>
            <person name="Kawahara Y."/>
            <person name="de la Bastide M."/>
            <person name="Hamilton J.P."/>
            <person name="Kanamori H."/>
            <person name="McCombie W.R."/>
            <person name="Ouyang S."/>
            <person name="Schwartz D.C."/>
            <person name="Tanaka T."/>
            <person name="Wu J."/>
            <person name="Zhou S."/>
            <person name="Childs K.L."/>
            <person name="Davidson R.M."/>
            <person name="Lin H."/>
            <person name="Quesada-Ocampo L."/>
            <person name="Vaillancourt B."/>
            <person name="Sakai H."/>
            <person name="Lee S.S."/>
            <person name="Kim J."/>
            <person name="Numa H."/>
            <person name="Itoh T."/>
            <person name="Buell C.R."/>
            <person name="Matsumoto T."/>
        </authorList>
    </citation>
    <scope>GENOME REANNOTATION</scope>
    <source>
        <strain>cv. Nipponbare</strain>
    </source>
</reference>
<reference key="5">
    <citation type="journal article" date="2012" name="Plant Cell">
        <title>Convergent starvation signals and hormone crosstalk in regulating nutrient mobilization upon germination in cereals.</title>
        <authorList>
            <person name="Hong Y.F."/>
            <person name="Ho T.H."/>
            <person name="Wu C.F."/>
            <person name="Ho S.L."/>
            <person name="Yeh R.H."/>
            <person name="Lu C.A."/>
            <person name="Chen P.W."/>
            <person name="Yu L.C."/>
            <person name="Chao A."/>
            <person name="Yu S.M."/>
        </authorList>
    </citation>
    <scope>FUNCTION</scope>
    <scope>INTERACTION WITH GAMYB</scope>
    <scope>SUBCELLULAR LOCATION</scope>
    <scope>NUCLEAR LOCALIZATION SIGNAL</scope>
    <scope>NUCLEAR EXPORT SIGNAL</scope>
    <scope>MUTAGENESIS OF 72-LEU--LEU-86; 133-LYS--LYS-140; 196-ARG--ARG-200 AND 203-ILE--VAL-215</scope>
</reference>
<feature type="chain" id="PRO_0000439173" description="Transcription factor MYBS1">
    <location>
        <begin position="1"/>
        <end position="306"/>
    </location>
</feature>
<feature type="domain" description="Myb-like" evidence="1">
    <location>
        <begin position="18"/>
        <end position="73"/>
    </location>
</feature>
<feature type="domain" description="HTH myb-type" evidence="2">
    <location>
        <begin position="136"/>
        <end position="192"/>
    </location>
</feature>
<feature type="DNA-binding region" description="H-T-H motif" evidence="2">
    <location>
        <begin position="164"/>
        <end position="188"/>
    </location>
</feature>
<feature type="region of interest" description="Disordered" evidence="3">
    <location>
        <begin position="89"/>
        <end position="142"/>
    </location>
</feature>
<feature type="region of interest" description="Disordered" evidence="3">
    <location>
        <begin position="228"/>
        <end position="255"/>
    </location>
</feature>
<feature type="short sequence motif" description="Nuclear export signal 1" evidence="5">
    <location>
        <begin position="72"/>
        <end position="86"/>
    </location>
</feature>
<feature type="short sequence motif" description="Nuclear localization signal 1" evidence="5">
    <location>
        <begin position="133"/>
        <end position="140"/>
    </location>
</feature>
<feature type="short sequence motif" description="Nuclear localization signal 2" evidence="5">
    <location>
        <begin position="196"/>
        <end position="200"/>
    </location>
</feature>
<feature type="short sequence motif" description="Nuclear export signal 2" evidence="5">
    <location>
        <begin position="203"/>
        <end position="215"/>
    </location>
</feature>
<feature type="compositionally biased region" description="Low complexity" evidence="3">
    <location>
        <begin position="92"/>
        <end position="109"/>
    </location>
</feature>
<feature type="compositionally biased region" description="Basic and acidic residues" evidence="3">
    <location>
        <begin position="110"/>
        <end position="120"/>
    </location>
</feature>
<feature type="compositionally biased region" description="Basic and acidic residues" evidence="3">
    <location>
        <begin position="132"/>
        <end position="142"/>
    </location>
</feature>
<feature type="compositionally biased region" description="Low complexity" evidence="3">
    <location>
        <begin position="228"/>
        <end position="241"/>
    </location>
</feature>
<feature type="mutagenesis site" description="Abolishes cytoplasmic localization." evidence="5">
    <original>LVEDVAAIDAGRVPL</original>
    <variation>AAEDAAAADAGRAPA</variation>
    <location>
        <begin position="72"/>
        <end position="86"/>
    </location>
</feature>
<feature type="mutagenesis site" description="Abolishes nuclear localization." evidence="5">
    <original>KAEQERRK</original>
    <variation>AAEQEAAA</variation>
    <location>
        <begin position="133"/>
        <end position="140"/>
    </location>
</feature>
<feature type="mutagenesis site" description="Reduces nuclear localization." evidence="5">
    <original>RDRRR</original>
    <variation>ADAAA</variation>
    <location>
        <begin position="196"/>
        <end position="200"/>
    </location>
</feature>
<feature type="mutagenesis site" description="Reduces cytoplasmic localization." evidence="5">
    <original>IHDITSVTAGDQV</original>
    <variation>AHDATSATAGDQA</variation>
    <location>
        <begin position="203"/>
        <end position="215"/>
    </location>
</feature>
<name>MYBS1_ORYSJ</name>
<organism>
    <name type="scientific">Oryza sativa subsp. japonica</name>
    <name type="common">Rice</name>
    <dbReference type="NCBI Taxonomy" id="39947"/>
    <lineage>
        <taxon>Eukaryota</taxon>
        <taxon>Viridiplantae</taxon>
        <taxon>Streptophyta</taxon>
        <taxon>Embryophyta</taxon>
        <taxon>Tracheophyta</taxon>
        <taxon>Spermatophyta</taxon>
        <taxon>Magnoliopsida</taxon>
        <taxon>Liliopsida</taxon>
        <taxon>Poales</taxon>
        <taxon>Poaceae</taxon>
        <taxon>BOP clade</taxon>
        <taxon>Oryzoideae</taxon>
        <taxon>Oryzeae</taxon>
        <taxon>Oryzinae</taxon>
        <taxon>Oryza</taxon>
        <taxon>Oryza sativa</taxon>
    </lineage>
</organism>
<evidence type="ECO:0000255" key="1">
    <source>
        <dbReference type="PROSITE-ProRule" id="PRU00133"/>
    </source>
</evidence>
<evidence type="ECO:0000255" key="2">
    <source>
        <dbReference type="PROSITE-ProRule" id="PRU00625"/>
    </source>
</evidence>
<evidence type="ECO:0000256" key="3">
    <source>
        <dbReference type="SAM" id="MobiDB-lite"/>
    </source>
</evidence>
<evidence type="ECO:0000269" key="4">
    <source>
    </source>
</evidence>
<evidence type="ECO:0000269" key="5">
    <source>
    </source>
</evidence>
<evidence type="ECO:0000303" key="6">
    <source>
    </source>
</evidence>
<evidence type="ECO:0000312" key="7">
    <source>
        <dbReference type="EMBL" id="BAC05661.1"/>
    </source>
</evidence>
<evidence type="ECO:0000312" key="8">
    <source>
        <dbReference type="EMBL" id="BAS72473.1"/>
    </source>
</evidence>
<comment type="function">
    <text evidence="4 5">Transcription activator that binds to 5'-TATCCA-3' elements in gene promoters. Derepresses strongly the sugar-repressed transcription of promoters containing SRS or 5'-TATCCA-3' elements. Functions with GAMYB to integrate diverse nutrient starvation and gibberellin (GA) signaling pathways during germination of grains. Sugar, nitrogen and phosphate starvation signals converge and interconnect with GA to promote the co-nuclear import of MYBS1 and GAMYB, resulting in the expression of a large set of GA-inducible hydrolases, transporters, and regulators that are essential for mobilization of nutrient reserves in the endosperm to support seedling growth (PubMed:22773748).</text>
</comment>
<comment type="subunit">
    <text evidence="4 5">Homodimer (PubMed:12172034). Interacts with GAMYB (PubMed:22773748).</text>
</comment>
<comment type="subcellular location">
    <subcellularLocation>
        <location evidence="2 5">Nucleus</location>
    </subcellularLocation>
    <subcellularLocation>
        <location evidence="5">Cytoplasm</location>
    </subcellularLocation>
    <text evidence="5">Preferentially localized to the nucleus under sugar starvation conditions. Glucose inhibits nuclear localization.</text>
</comment>
<comment type="tissue specificity">
    <text evidence="4">Expressed in aboveground tissues, with the highest level in leaves.</text>
</comment>
<comment type="induction">
    <text evidence="4">Repressed by sucrose and gibberellic acid (GA).</text>
</comment>
<dbReference type="EMBL" id="AY151042">
    <property type="protein sequence ID" value="AAN63152.1"/>
    <property type="molecule type" value="mRNA"/>
</dbReference>
<dbReference type="EMBL" id="AP004611">
    <property type="protein sequence ID" value="BAC05661.1"/>
    <property type="molecule type" value="Genomic_DNA"/>
</dbReference>
<dbReference type="EMBL" id="AP014957">
    <property type="protein sequence ID" value="BAS72473.1"/>
    <property type="molecule type" value="Genomic_DNA"/>
</dbReference>
<dbReference type="RefSeq" id="XP_015627636.1">
    <property type="nucleotide sequence ID" value="XM_015772150.1"/>
</dbReference>
<dbReference type="FunCoup" id="Q8LH59">
    <property type="interactions" value="1"/>
</dbReference>
<dbReference type="STRING" id="39947.Q8LH59"/>
<dbReference type="PaxDb" id="39947-Q8LH59"/>
<dbReference type="EnsemblPlants" id="Os01t0524500-02">
    <property type="protein sequence ID" value="Os01t0524500-02"/>
    <property type="gene ID" value="Os01g0524500"/>
</dbReference>
<dbReference type="Gramene" id="Os01t0524500-02">
    <property type="protein sequence ID" value="Os01t0524500-02"/>
    <property type="gene ID" value="Os01g0524500"/>
</dbReference>
<dbReference type="InParanoid" id="Q8LH59"/>
<dbReference type="OrthoDB" id="118550at2759"/>
<dbReference type="Proteomes" id="UP000059680">
    <property type="component" value="Chromosome 1"/>
</dbReference>
<dbReference type="ExpressionAtlas" id="Q8LH59">
    <property type="expression patterns" value="baseline and differential"/>
</dbReference>
<dbReference type="GO" id="GO:0005737">
    <property type="term" value="C:cytoplasm"/>
    <property type="evidence" value="ECO:0000314"/>
    <property type="project" value="UniProtKB"/>
</dbReference>
<dbReference type="GO" id="GO:0005634">
    <property type="term" value="C:nucleus"/>
    <property type="evidence" value="ECO:0000314"/>
    <property type="project" value="UniProtKB"/>
</dbReference>
<dbReference type="GO" id="GO:0003677">
    <property type="term" value="F:DNA binding"/>
    <property type="evidence" value="ECO:0007669"/>
    <property type="project" value="UniProtKB-KW"/>
</dbReference>
<dbReference type="GO" id="GO:0003700">
    <property type="term" value="F:DNA-binding transcription factor activity"/>
    <property type="evidence" value="ECO:0000314"/>
    <property type="project" value="UniProtKB"/>
</dbReference>
<dbReference type="GO" id="GO:0042803">
    <property type="term" value="F:protein homodimerization activity"/>
    <property type="evidence" value="ECO:0000314"/>
    <property type="project" value="UniProtKB"/>
</dbReference>
<dbReference type="GO" id="GO:0045893">
    <property type="term" value="P:positive regulation of DNA-templated transcription"/>
    <property type="evidence" value="ECO:0000314"/>
    <property type="project" value="UniProtKB"/>
</dbReference>
<dbReference type="GO" id="GO:0009739">
    <property type="term" value="P:response to gibberellin"/>
    <property type="evidence" value="ECO:0000270"/>
    <property type="project" value="UniProtKB"/>
</dbReference>
<dbReference type="GO" id="GO:0009751">
    <property type="term" value="P:response to salicylic acid"/>
    <property type="evidence" value="ECO:0000318"/>
    <property type="project" value="GO_Central"/>
</dbReference>
<dbReference type="GO" id="GO:0009744">
    <property type="term" value="P:response to sucrose"/>
    <property type="evidence" value="ECO:0000270"/>
    <property type="project" value="UniProtKB"/>
</dbReference>
<dbReference type="CDD" id="cd00167">
    <property type="entry name" value="SANT"/>
    <property type="match status" value="1"/>
</dbReference>
<dbReference type="FunFam" id="1.10.10.60:FF:000009">
    <property type="entry name" value="transcription factor MYB1R1"/>
    <property type="match status" value="1"/>
</dbReference>
<dbReference type="FunFam" id="1.10.10.60:FF:000154">
    <property type="entry name" value="Transcription factor SRM1"/>
    <property type="match status" value="1"/>
</dbReference>
<dbReference type="Gene3D" id="1.10.10.60">
    <property type="entry name" value="Homeodomain-like"/>
    <property type="match status" value="2"/>
</dbReference>
<dbReference type="InterPro" id="IPR009057">
    <property type="entry name" value="Homeodomain-like_sf"/>
</dbReference>
<dbReference type="InterPro" id="IPR017930">
    <property type="entry name" value="Myb_dom"/>
</dbReference>
<dbReference type="InterPro" id="IPR006447">
    <property type="entry name" value="Myb_dom_plants"/>
</dbReference>
<dbReference type="InterPro" id="IPR052245">
    <property type="entry name" value="Plant_Stress_Dev_TF"/>
</dbReference>
<dbReference type="InterPro" id="IPR001005">
    <property type="entry name" value="SANT/Myb"/>
</dbReference>
<dbReference type="InterPro" id="IPR017884">
    <property type="entry name" value="SANT_dom"/>
</dbReference>
<dbReference type="NCBIfam" id="TIGR01557">
    <property type="entry name" value="myb_SHAQKYF"/>
    <property type="match status" value="1"/>
</dbReference>
<dbReference type="PANTHER" id="PTHR44191">
    <property type="entry name" value="TRANSCRIPTION FACTOR KUA1"/>
    <property type="match status" value="1"/>
</dbReference>
<dbReference type="PANTHER" id="PTHR44191:SF2">
    <property type="entry name" value="TRANSCRIPTION FACTOR MYBS1"/>
    <property type="match status" value="1"/>
</dbReference>
<dbReference type="Pfam" id="PF00249">
    <property type="entry name" value="Myb_DNA-binding"/>
    <property type="match status" value="1"/>
</dbReference>
<dbReference type="SMART" id="SM00717">
    <property type="entry name" value="SANT"/>
    <property type="match status" value="2"/>
</dbReference>
<dbReference type="SUPFAM" id="SSF46689">
    <property type="entry name" value="Homeodomain-like"/>
    <property type="match status" value="1"/>
</dbReference>
<dbReference type="PROSITE" id="PS51294">
    <property type="entry name" value="HTH_MYB"/>
    <property type="match status" value="1"/>
</dbReference>
<dbReference type="PROSITE" id="PS50090">
    <property type="entry name" value="MYB_LIKE"/>
    <property type="match status" value="1"/>
</dbReference>